<reference key="1">
    <citation type="submission" date="2005-10" db="EMBL/GenBank/DDBJ databases">
        <title>Complete sequence of chromosome 1 of Burkholderia sp. 383.</title>
        <authorList>
            <consortium name="US DOE Joint Genome Institute"/>
            <person name="Copeland A."/>
            <person name="Lucas S."/>
            <person name="Lapidus A."/>
            <person name="Barry K."/>
            <person name="Detter J.C."/>
            <person name="Glavina T."/>
            <person name="Hammon N."/>
            <person name="Israni S."/>
            <person name="Pitluck S."/>
            <person name="Chain P."/>
            <person name="Malfatti S."/>
            <person name="Shin M."/>
            <person name="Vergez L."/>
            <person name="Schmutz J."/>
            <person name="Larimer F."/>
            <person name="Land M."/>
            <person name="Kyrpides N."/>
            <person name="Lykidis A."/>
            <person name="Richardson P."/>
        </authorList>
    </citation>
    <scope>NUCLEOTIDE SEQUENCE [LARGE SCALE GENOMIC DNA]</scope>
    <source>
        <strain>ATCC 17760 / DSM 23089 / LMG 22485 / NCIMB 9086 / R18194 / 383</strain>
    </source>
</reference>
<accession>Q39FG1</accession>
<name>YCIB_BURL3</name>
<organism>
    <name type="scientific">Burkholderia lata (strain ATCC 17760 / DSM 23089 / LMG 22485 / NCIMB 9086 / R18194 / 383)</name>
    <dbReference type="NCBI Taxonomy" id="482957"/>
    <lineage>
        <taxon>Bacteria</taxon>
        <taxon>Pseudomonadati</taxon>
        <taxon>Pseudomonadota</taxon>
        <taxon>Betaproteobacteria</taxon>
        <taxon>Burkholderiales</taxon>
        <taxon>Burkholderiaceae</taxon>
        <taxon>Burkholderia</taxon>
        <taxon>Burkholderia cepacia complex</taxon>
    </lineage>
</organism>
<feature type="chain" id="PRO_1000020999" description="Inner membrane-spanning protein YciB">
    <location>
        <begin position="1"/>
        <end position="176"/>
    </location>
</feature>
<feature type="transmembrane region" description="Helical" evidence="1">
    <location>
        <begin position="3"/>
        <end position="23"/>
    </location>
</feature>
<feature type="transmembrane region" description="Helical" evidence="1">
    <location>
        <begin position="24"/>
        <end position="44"/>
    </location>
</feature>
<feature type="transmembrane region" description="Helical" evidence="1">
    <location>
        <begin position="49"/>
        <end position="69"/>
    </location>
</feature>
<feature type="transmembrane region" description="Helical" evidence="1">
    <location>
        <begin position="81"/>
        <end position="101"/>
    </location>
</feature>
<feature type="transmembrane region" description="Helical" evidence="1">
    <location>
        <begin position="121"/>
        <end position="141"/>
    </location>
</feature>
<feature type="transmembrane region" description="Helical" evidence="1">
    <location>
        <begin position="149"/>
        <end position="169"/>
    </location>
</feature>
<gene>
    <name evidence="1" type="primary">yciB</name>
    <name type="ordered locus">Bcep18194_A5211</name>
</gene>
<proteinExistence type="inferred from homology"/>
<sequence>MKFLFDLFPIILFFAAFKVWGIFTATAVAIVATLAQVAWVAFRHRKVDTMLWVSLGVIVVFGGATLVLHDEKFIQWKPTVLYWLFAIGLLAARYAFGNNLIEKMMGKQLTLPHPVWDKLNVAWALFFAVLGVANLYVVHNFTESQWVNFKLFGTTGAMVVFIILQSLWLTKYLKDE</sequence>
<protein>
    <recommendedName>
        <fullName evidence="1">Inner membrane-spanning protein YciB</fullName>
    </recommendedName>
</protein>
<evidence type="ECO:0000255" key="1">
    <source>
        <dbReference type="HAMAP-Rule" id="MF_00189"/>
    </source>
</evidence>
<dbReference type="EMBL" id="CP000151">
    <property type="protein sequence ID" value="ABB08805.1"/>
    <property type="molecule type" value="Genomic_DNA"/>
</dbReference>
<dbReference type="RefSeq" id="WP_011352350.1">
    <property type="nucleotide sequence ID" value="NZ_WNDV01000021.1"/>
</dbReference>
<dbReference type="KEGG" id="bur:Bcep18194_A5211"/>
<dbReference type="HOGENOM" id="CLU_089554_2_0_4"/>
<dbReference type="Proteomes" id="UP000002705">
    <property type="component" value="Chromosome 1"/>
</dbReference>
<dbReference type="GO" id="GO:0005886">
    <property type="term" value="C:plasma membrane"/>
    <property type="evidence" value="ECO:0007669"/>
    <property type="project" value="UniProtKB-SubCell"/>
</dbReference>
<dbReference type="HAMAP" id="MF_00189">
    <property type="entry name" value="YciB"/>
    <property type="match status" value="1"/>
</dbReference>
<dbReference type="InterPro" id="IPR006008">
    <property type="entry name" value="YciB"/>
</dbReference>
<dbReference type="NCBIfam" id="TIGR00997">
    <property type="entry name" value="ispZ"/>
    <property type="match status" value="1"/>
</dbReference>
<dbReference type="NCBIfam" id="NF001325">
    <property type="entry name" value="PRK00259.1-3"/>
    <property type="match status" value="1"/>
</dbReference>
<dbReference type="PANTHER" id="PTHR36917:SF1">
    <property type="entry name" value="INNER MEMBRANE-SPANNING PROTEIN YCIB"/>
    <property type="match status" value="1"/>
</dbReference>
<dbReference type="PANTHER" id="PTHR36917">
    <property type="entry name" value="INTRACELLULAR SEPTATION PROTEIN A-RELATED"/>
    <property type="match status" value="1"/>
</dbReference>
<dbReference type="Pfam" id="PF04279">
    <property type="entry name" value="IspA"/>
    <property type="match status" value="1"/>
</dbReference>
<comment type="function">
    <text evidence="1">Plays a role in cell envelope biogenesis, maintenance of cell envelope integrity and membrane homeostasis.</text>
</comment>
<comment type="subcellular location">
    <subcellularLocation>
        <location evidence="1">Cell inner membrane</location>
        <topology evidence="1">Multi-pass membrane protein</topology>
    </subcellularLocation>
</comment>
<comment type="similarity">
    <text evidence="1">Belongs to the YciB family.</text>
</comment>
<keyword id="KW-0997">Cell inner membrane</keyword>
<keyword id="KW-1003">Cell membrane</keyword>
<keyword id="KW-0472">Membrane</keyword>
<keyword id="KW-0812">Transmembrane</keyword>
<keyword id="KW-1133">Transmembrane helix</keyword>